<geneLocation type="chloroplast"/>
<name>PSBL_IPOPU</name>
<comment type="function">
    <text evidence="1">One of the components of the core complex of photosystem II (PSII). PSII is a light-driven water:plastoquinone oxidoreductase that uses light energy to abstract electrons from H(2)O, generating O(2) and a proton gradient subsequently used for ATP formation. It consists of a core antenna complex that captures photons, and an electron transfer chain that converts photonic excitation into a charge separation. This subunit is found at the monomer-monomer interface and is required for correct PSII assembly and/or dimerization.</text>
</comment>
<comment type="subunit">
    <text evidence="1">PSII is composed of 1 copy each of membrane proteins PsbA, PsbB, PsbC, PsbD, PsbE, PsbF, PsbH, PsbI, PsbJ, PsbK, PsbL, PsbM, PsbT, PsbX, PsbY, PsbZ, Psb30/Ycf12, at least 3 peripheral proteins of the oxygen-evolving complex and a large number of cofactors. It forms dimeric complexes.</text>
</comment>
<comment type="subcellular location">
    <subcellularLocation>
        <location evidence="1">Plastid</location>
        <location evidence="1">Chloroplast thylakoid membrane</location>
        <topology evidence="1">Single-pass membrane protein</topology>
    </subcellularLocation>
</comment>
<comment type="similarity">
    <text evidence="1">Belongs to the PsbL family.</text>
</comment>
<accession>A7Y3F8</accession>
<feature type="chain" id="PRO_0000353259" description="Photosystem II reaction center protein L">
    <location>
        <begin position="1"/>
        <end position="38"/>
    </location>
</feature>
<feature type="transmembrane region" description="Helical" evidence="1">
    <location>
        <begin position="17"/>
        <end position="37"/>
    </location>
</feature>
<reference key="1">
    <citation type="journal article" date="2007" name="BMC Plant Biol.">
        <title>Complete plastid genome sequences suggest strong selection for retention of photosynthetic genes in the parasitic plant genus Cuscuta.</title>
        <authorList>
            <person name="McNeal J.R."/>
            <person name="Kuehl J.V."/>
            <person name="Boore J.L."/>
            <person name="dePamphilis C.W."/>
        </authorList>
    </citation>
    <scope>NUCLEOTIDE SEQUENCE [LARGE SCALE GENOMIC DNA]</scope>
</reference>
<evidence type="ECO:0000255" key="1">
    <source>
        <dbReference type="HAMAP-Rule" id="MF_01317"/>
    </source>
</evidence>
<keyword id="KW-0150">Chloroplast</keyword>
<keyword id="KW-0472">Membrane</keyword>
<keyword id="KW-0602">Photosynthesis</keyword>
<keyword id="KW-0604">Photosystem II</keyword>
<keyword id="KW-0934">Plastid</keyword>
<keyword id="KW-0674">Reaction center</keyword>
<keyword id="KW-0793">Thylakoid</keyword>
<keyword id="KW-0812">Transmembrane</keyword>
<keyword id="KW-1133">Transmembrane helix</keyword>
<gene>
    <name evidence="1" type="primary">psbL</name>
</gene>
<dbReference type="EMBL" id="EU118126">
    <property type="protein sequence ID" value="ABV02363.1"/>
    <property type="molecule type" value="Genomic_DNA"/>
</dbReference>
<dbReference type="RefSeq" id="YP_001468323.1">
    <property type="nucleotide sequence ID" value="NC_009808.1"/>
</dbReference>
<dbReference type="SMR" id="A7Y3F8"/>
<dbReference type="GeneID" id="5601341"/>
<dbReference type="GO" id="GO:0009535">
    <property type="term" value="C:chloroplast thylakoid membrane"/>
    <property type="evidence" value="ECO:0007669"/>
    <property type="project" value="UniProtKB-SubCell"/>
</dbReference>
<dbReference type="GO" id="GO:0009539">
    <property type="term" value="C:photosystem II reaction center"/>
    <property type="evidence" value="ECO:0007669"/>
    <property type="project" value="InterPro"/>
</dbReference>
<dbReference type="GO" id="GO:0015979">
    <property type="term" value="P:photosynthesis"/>
    <property type="evidence" value="ECO:0007669"/>
    <property type="project" value="UniProtKB-UniRule"/>
</dbReference>
<dbReference type="HAMAP" id="MF_01317">
    <property type="entry name" value="PSII_PsbL"/>
    <property type="match status" value="1"/>
</dbReference>
<dbReference type="InterPro" id="IPR003372">
    <property type="entry name" value="PSII_PsbL"/>
</dbReference>
<dbReference type="InterPro" id="IPR037266">
    <property type="entry name" value="PSII_PsbL_sf"/>
</dbReference>
<dbReference type="NCBIfam" id="NF001972">
    <property type="entry name" value="PRK00753.1"/>
    <property type="match status" value="1"/>
</dbReference>
<dbReference type="Pfam" id="PF02419">
    <property type="entry name" value="PsbL"/>
    <property type="match status" value="1"/>
</dbReference>
<dbReference type="SUPFAM" id="SSF161017">
    <property type="entry name" value="Photosystem II reaction center protein L, PsbL"/>
    <property type="match status" value="1"/>
</dbReference>
<protein>
    <recommendedName>
        <fullName evidence="1">Photosystem II reaction center protein L</fullName>
        <shortName evidence="1">PSII-L</shortName>
    </recommendedName>
</protein>
<organism>
    <name type="scientific">Ipomoea purpurea</name>
    <name type="common">Common morning glory</name>
    <name type="synonym">Pharbitis purpurea</name>
    <dbReference type="NCBI Taxonomy" id="4121"/>
    <lineage>
        <taxon>Eukaryota</taxon>
        <taxon>Viridiplantae</taxon>
        <taxon>Streptophyta</taxon>
        <taxon>Embryophyta</taxon>
        <taxon>Tracheophyta</taxon>
        <taxon>Spermatophyta</taxon>
        <taxon>Magnoliopsida</taxon>
        <taxon>eudicotyledons</taxon>
        <taxon>Gunneridae</taxon>
        <taxon>Pentapetalae</taxon>
        <taxon>asterids</taxon>
        <taxon>lamiids</taxon>
        <taxon>Solanales</taxon>
        <taxon>Convolvulaceae</taxon>
        <taxon>Ipomoeeae</taxon>
        <taxon>Ipomoea</taxon>
    </lineage>
</organism>
<proteinExistence type="inferred from homology"/>
<sequence>MTQSNPNEQNVELNRTSLYWGLLLIFVLAVLFSNYFFN</sequence>